<name>RPOC_PSYWF</name>
<protein>
    <recommendedName>
        <fullName evidence="1">DNA-directed RNA polymerase subunit beta'</fullName>
        <shortName evidence="1">RNAP subunit beta'</shortName>
        <ecNumber evidence="1">2.7.7.6</ecNumber>
    </recommendedName>
    <alternativeName>
        <fullName evidence="1">RNA polymerase subunit beta'</fullName>
    </alternativeName>
    <alternativeName>
        <fullName evidence="1">Transcriptase subunit beta'</fullName>
    </alternativeName>
</protein>
<keyword id="KW-0240">DNA-directed RNA polymerase</keyword>
<keyword id="KW-0460">Magnesium</keyword>
<keyword id="KW-0479">Metal-binding</keyword>
<keyword id="KW-0548">Nucleotidyltransferase</keyword>
<keyword id="KW-0804">Transcription</keyword>
<keyword id="KW-0808">Transferase</keyword>
<keyword id="KW-0862">Zinc</keyword>
<organism>
    <name type="scientific">Psychrobacter sp. (strain PRwf-1)</name>
    <dbReference type="NCBI Taxonomy" id="349106"/>
    <lineage>
        <taxon>Bacteria</taxon>
        <taxon>Pseudomonadati</taxon>
        <taxon>Pseudomonadota</taxon>
        <taxon>Gammaproteobacteria</taxon>
        <taxon>Moraxellales</taxon>
        <taxon>Moraxellaceae</taxon>
        <taxon>Psychrobacter</taxon>
    </lineage>
</organism>
<accession>A5WH34</accession>
<comment type="function">
    <text evidence="1">DNA-dependent RNA polymerase catalyzes the transcription of DNA into RNA using the four ribonucleoside triphosphates as substrates.</text>
</comment>
<comment type="catalytic activity">
    <reaction evidence="1">
        <text>RNA(n) + a ribonucleoside 5'-triphosphate = RNA(n+1) + diphosphate</text>
        <dbReference type="Rhea" id="RHEA:21248"/>
        <dbReference type="Rhea" id="RHEA-COMP:14527"/>
        <dbReference type="Rhea" id="RHEA-COMP:17342"/>
        <dbReference type="ChEBI" id="CHEBI:33019"/>
        <dbReference type="ChEBI" id="CHEBI:61557"/>
        <dbReference type="ChEBI" id="CHEBI:140395"/>
        <dbReference type="EC" id="2.7.7.6"/>
    </reaction>
</comment>
<comment type="cofactor">
    <cofactor evidence="1">
        <name>Mg(2+)</name>
        <dbReference type="ChEBI" id="CHEBI:18420"/>
    </cofactor>
    <text evidence="1">Binds 1 Mg(2+) ion per subunit.</text>
</comment>
<comment type="cofactor">
    <cofactor evidence="1">
        <name>Zn(2+)</name>
        <dbReference type="ChEBI" id="CHEBI:29105"/>
    </cofactor>
    <text evidence="1">Binds 2 Zn(2+) ions per subunit.</text>
</comment>
<comment type="subunit">
    <text evidence="1">The RNAP catalytic core consists of 2 alpha, 1 beta, 1 beta' and 1 omega subunit. When a sigma factor is associated with the core the holoenzyme is formed, which can initiate transcription.</text>
</comment>
<comment type="similarity">
    <text evidence="1">Belongs to the RNA polymerase beta' chain family.</text>
</comment>
<reference key="1">
    <citation type="submission" date="2007-05" db="EMBL/GenBank/DDBJ databases">
        <title>Complete sequence of chromosome of Psychrobacter sp. PRwf-1.</title>
        <authorList>
            <consortium name="US DOE Joint Genome Institute"/>
            <person name="Copeland A."/>
            <person name="Lucas S."/>
            <person name="Lapidus A."/>
            <person name="Barry K."/>
            <person name="Detter J.C."/>
            <person name="Glavina del Rio T."/>
            <person name="Hammon N."/>
            <person name="Israni S."/>
            <person name="Dalin E."/>
            <person name="Tice H."/>
            <person name="Pitluck S."/>
            <person name="Chain P."/>
            <person name="Malfatti S."/>
            <person name="Shin M."/>
            <person name="Vergez L."/>
            <person name="Schmutz J."/>
            <person name="Larimer F."/>
            <person name="Land M."/>
            <person name="Hauser L."/>
            <person name="Kyrpides N."/>
            <person name="Kim E."/>
            <person name="Tiedje J."/>
            <person name="Richardson P."/>
        </authorList>
    </citation>
    <scope>NUCLEOTIDE SEQUENCE [LARGE SCALE GENOMIC DNA]</scope>
    <source>
        <strain>PRwf-1</strain>
    </source>
</reference>
<evidence type="ECO:0000255" key="1">
    <source>
        <dbReference type="HAMAP-Rule" id="MF_01322"/>
    </source>
</evidence>
<dbReference type="EC" id="2.7.7.6" evidence="1"/>
<dbReference type="EMBL" id="CP000713">
    <property type="protein sequence ID" value="ABQ94975.1"/>
    <property type="molecule type" value="Genomic_DNA"/>
</dbReference>
<dbReference type="SMR" id="A5WH34"/>
<dbReference type="STRING" id="349106.PsycPRwf_2035"/>
<dbReference type="KEGG" id="prw:PsycPRwf_2035"/>
<dbReference type="eggNOG" id="COG0086">
    <property type="taxonomic scope" value="Bacteria"/>
</dbReference>
<dbReference type="HOGENOM" id="CLU_000524_3_1_6"/>
<dbReference type="GO" id="GO:0000428">
    <property type="term" value="C:DNA-directed RNA polymerase complex"/>
    <property type="evidence" value="ECO:0007669"/>
    <property type="project" value="UniProtKB-KW"/>
</dbReference>
<dbReference type="GO" id="GO:0003677">
    <property type="term" value="F:DNA binding"/>
    <property type="evidence" value="ECO:0007669"/>
    <property type="project" value="UniProtKB-UniRule"/>
</dbReference>
<dbReference type="GO" id="GO:0003899">
    <property type="term" value="F:DNA-directed RNA polymerase activity"/>
    <property type="evidence" value="ECO:0007669"/>
    <property type="project" value="UniProtKB-UniRule"/>
</dbReference>
<dbReference type="GO" id="GO:0000287">
    <property type="term" value="F:magnesium ion binding"/>
    <property type="evidence" value="ECO:0007669"/>
    <property type="project" value="UniProtKB-UniRule"/>
</dbReference>
<dbReference type="GO" id="GO:0008270">
    <property type="term" value="F:zinc ion binding"/>
    <property type="evidence" value="ECO:0007669"/>
    <property type="project" value="UniProtKB-UniRule"/>
</dbReference>
<dbReference type="GO" id="GO:0006351">
    <property type="term" value="P:DNA-templated transcription"/>
    <property type="evidence" value="ECO:0007669"/>
    <property type="project" value="UniProtKB-UniRule"/>
</dbReference>
<dbReference type="CDD" id="cd02655">
    <property type="entry name" value="RNAP_beta'_C"/>
    <property type="match status" value="1"/>
</dbReference>
<dbReference type="CDD" id="cd01609">
    <property type="entry name" value="RNAP_beta'_N"/>
    <property type="match status" value="1"/>
</dbReference>
<dbReference type="FunFam" id="1.10.132.30:FF:000003">
    <property type="entry name" value="DNA-directed RNA polymerase subunit beta"/>
    <property type="match status" value="1"/>
</dbReference>
<dbReference type="FunFam" id="1.10.150.390:FF:000002">
    <property type="entry name" value="DNA-directed RNA polymerase subunit beta"/>
    <property type="match status" value="1"/>
</dbReference>
<dbReference type="Gene3D" id="1.10.132.30">
    <property type="match status" value="1"/>
</dbReference>
<dbReference type="Gene3D" id="1.10.150.390">
    <property type="match status" value="1"/>
</dbReference>
<dbReference type="Gene3D" id="1.10.1790.20">
    <property type="match status" value="1"/>
</dbReference>
<dbReference type="Gene3D" id="1.10.40.90">
    <property type="match status" value="1"/>
</dbReference>
<dbReference type="Gene3D" id="2.40.40.20">
    <property type="match status" value="1"/>
</dbReference>
<dbReference type="Gene3D" id="2.40.50.100">
    <property type="match status" value="3"/>
</dbReference>
<dbReference type="Gene3D" id="4.10.860.120">
    <property type="entry name" value="RNA polymerase II, clamp domain"/>
    <property type="match status" value="1"/>
</dbReference>
<dbReference type="Gene3D" id="1.10.274.100">
    <property type="entry name" value="RNA polymerase Rpb1, domain 3"/>
    <property type="match status" value="1"/>
</dbReference>
<dbReference type="HAMAP" id="MF_01322">
    <property type="entry name" value="RNApol_bact_RpoC"/>
    <property type="match status" value="1"/>
</dbReference>
<dbReference type="InterPro" id="IPR045867">
    <property type="entry name" value="DNA-dir_RpoC_beta_prime"/>
</dbReference>
<dbReference type="InterPro" id="IPR012754">
    <property type="entry name" value="DNA-dir_RpoC_beta_prime_bact"/>
</dbReference>
<dbReference type="InterPro" id="IPR000722">
    <property type="entry name" value="RNA_pol_asu"/>
</dbReference>
<dbReference type="InterPro" id="IPR006592">
    <property type="entry name" value="RNA_pol_N"/>
</dbReference>
<dbReference type="InterPro" id="IPR007080">
    <property type="entry name" value="RNA_pol_Rpb1_1"/>
</dbReference>
<dbReference type="InterPro" id="IPR007066">
    <property type="entry name" value="RNA_pol_Rpb1_3"/>
</dbReference>
<dbReference type="InterPro" id="IPR042102">
    <property type="entry name" value="RNA_pol_Rpb1_3_sf"/>
</dbReference>
<dbReference type="InterPro" id="IPR007083">
    <property type="entry name" value="RNA_pol_Rpb1_4"/>
</dbReference>
<dbReference type="InterPro" id="IPR007081">
    <property type="entry name" value="RNA_pol_Rpb1_5"/>
</dbReference>
<dbReference type="InterPro" id="IPR044893">
    <property type="entry name" value="RNA_pol_Rpb1_clamp_domain"/>
</dbReference>
<dbReference type="InterPro" id="IPR038120">
    <property type="entry name" value="Rpb1_funnel_sf"/>
</dbReference>
<dbReference type="NCBIfam" id="TIGR02386">
    <property type="entry name" value="rpoC_TIGR"/>
    <property type="match status" value="1"/>
</dbReference>
<dbReference type="PANTHER" id="PTHR19376">
    <property type="entry name" value="DNA-DIRECTED RNA POLYMERASE"/>
    <property type="match status" value="1"/>
</dbReference>
<dbReference type="PANTHER" id="PTHR19376:SF54">
    <property type="entry name" value="DNA-DIRECTED RNA POLYMERASE SUBUNIT BETA"/>
    <property type="match status" value="1"/>
</dbReference>
<dbReference type="Pfam" id="PF04997">
    <property type="entry name" value="RNA_pol_Rpb1_1"/>
    <property type="match status" value="1"/>
</dbReference>
<dbReference type="Pfam" id="PF00623">
    <property type="entry name" value="RNA_pol_Rpb1_2"/>
    <property type="match status" value="1"/>
</dbReference>
<dbReference type="Pfam" id="PF04983">
    <property type="entry name" value="RNA_pol_Rpb1_3"/>
    <property type="match status" value="1"/>
</dbReference>
<dbReference type="Pfam" id="PF05000">
    <property type="entry name" value="RNA_pol_Rpb1_4"/>
    <property type="match status" value="1"/>
</dbReference>
<dbReference type="Pfam" id="PF04998">
    <property type="entry name" value="RNA_pol_Rpb1_5"/>
    <property type="match status" value="1"/>
</dbReference>
<dbReference type="SMART" id="SM00663">
    <property type="entry name" value="RPOLA_N"/>
    <property type="match status" value="1"/>
</dbReference>
<dbReference type="SUPFAM" id="SSF64484">
    <property type="entry name" value="beta and beta-prime subunits of DNA dependent RNA-polymerase"/>
    <property type="match status" value="1"/>
</dbReference>
<feature type="chain" id="PRO_1000073244" description="DNA-directed RNA polymerase subunit beta'">
    <location>
        <begin position="1"/>
        <end position="1406"/>
    </location>
</feature>
<feature type="binding site" evidence="1">
    <location>
        <position position="72"/>
    </location>
    <ligand>
        <name>Zn(2+)</name>
        <dbReference type="ChEBI" id="CHEBI:29105"/>
        <label>1</label>
    </ligand>
</feature>
<feature type="binding site" evidence="1">
    <location>
        <position position="74"/>
    </location>
    <ligand>
        <name>Zn(2+)</name>
        <dbReference type="ChEBI" id="CHEBI:29105"/>
        <label>1</label>
    </ligand>
</feature>
<feature type="binding site" evidence="1">
    <location>
        <position position="87"/>
    </location>
    <ligand>
        <name>Zn(2+)</name>
        <dbReference type="ChEBI" id="CHEBI:29105"/>
        <label>1</label>
    </ligand>
</feature>
<feature type="binding site" evidence="1">
    <location>
        <position position="90"/>
    </location>
    <ligand>
        <name>Zn(2+)</name>
        <dbReference type="ChEBI" id="CHEBI:29105"/>
        <label>1</label>
    </ligand>
</feature>
<feature type="binding site" evidence="1">
    <location>
        <position position="462"/>
    </location>
    <ligand>
        <name>Mg(2+)</name>
        <dbReference type="ChEBI" id="CHEBI:18420"/>
    </ligand>
</feature>
<feature type="binding site" evidence="1">
    <location>
        <position position="464"/>
    </location>
    <ligand>
        <name>Mg(2+)</name>
        <dbReference type="ChEBI" id="CHEBI:18420"/>
    </ligand>
</feature>
<feature type="binding site" evidence="1">
    <location>
        <position position="466"/>
    </location>
    <ligand>
        <name>Mg(2+)</name>
        <dbReference type="ChEBI" id="CHEBI:18420"/>
    </ligand>
</feature>
<feature type="binding site" evidence="1">
    <location>
        <position position="816"/>
    </location>
    <ligand>
        <name>Zn(2+)</name>
        <dbReference type="ChEBI" id="CHEBI:29105"/>
        <label>2</label>
    </ligand>
</feature>
<feature type="binding site" evidence="1">
    <location>
        <position position="889"/>
    </location>
    <ligand>
        <name>Zn(2+)</name>
        <dbReference type="ChEBI" id="CHEBI:29105"/>
        <label>2</label>
    </ligand>
</feature>
<feature type="binding site" evidence="1">
    <location>
        <position position="896"/>
    </location>
    <ligand>
        <name>Zn(2+)</name>
        <dbReference type="ChEBI" id="CHEBI:29105"/>
        <label>2</label>
    </ligand>
</feature>
<feature type="binding site" evidence="1">
    <location>
        <position position="899"/>
    </location>
    <ligand>
        <name>Zn(2+)</name>
        <dbReference type="ChEBI" id="CHEBI:29105"/>
        <label>2</label>
    </ligand>
</feature>
<proteinExistence type="inferred from homology"/>
<gene>
    <name evidence="1" type="primary">rpoC</name>
    <name type="ordered locus">PsycPRwf_2035</name>
</gene>
<sequence>MKDLLDIMKSPADNGKREFDSIQITLAAPETIKSWSHGEVKKPETINYRTFKPERDGLFCAKIFGPVKDFECLCGKYKRRKFQGVICEKCGVEVTTAKVRRDRMGHIDLASPVAHIWFLKSLPSRIGLLLDMTLRDIERVLYFESYVVTDPGMTSLEKYQLLDDEDYYKALEEFGDEFIAKMGAEAVQDLLKDIDIDLEIDDLREAIPNTGSETKLKKMSKRLKLLEAFRDSNNKPEWMVMSILPVLPPDLRPLVPLEGGRFATSDLNDLYRRVINRNNRLKRLLELNAPDIIVRNEKRMLQESVDALLDNGRRGRAITGSNKRPLKSLADMIKGKQGRFRQNLLGKRVDYSGRSVIVVGPTLRLHQCGLPKKMALELFKPFTYSKLLSHGMATTIKQAKKMVEREEPQVWDMLAMVIREHPVLLNRAPTLHRLGLQAFEPVLIEGKAIQLHPLVCTAFNADFDGDQMAVHVPLTLEAQLEARTLMMSTNNILSPANGDPIIVPSQDVVLGLYYISRSAVNAKGEGMIFATVNEALRAIGSNDLHVNAKIKVRVTETIFDEEGNSTKQTTLQETVAGRLLIWNVMPKGMRFAECNVEMTKKNISKLMNSCYRTRGVKESVIFADQLMYLGFAQATLSGVSIGIEDMVIPPMKKELIEAADAEVREIEQQFEQGFVTAGERYNKVVDIWSRTNDKVAKAMMDNLATDIVINAQGEEEEQKSFNSIFIMSDSGARGSAAQIRQLAGMRGLMAKPDGSIIETPIKANFREGLSVLQYFISTHGARKGLADTALKTANSGYLTRRLVDVAQDLVITENDCGTEKGVRMTPHIQGGEIIEKLGDRVLGRVVARDVMSREDEVLLAAGTLIDEHGVTVIDDNGIDEVWVRSVITCDVPHGVCAQCYGRDLARGHKVNIGESVGVMAAQSIGEPGTQLTMRTFHVGGAASSTSVDNSISARNTGFIRFHNMKTVDHVDGHLVIVSRSAEIGIADDVGRERERYKVPYGSSVLVKDGDEVESGQAIAKWDPHTHPIITEFAGKARFSDIIDGSTATVKIDEATGMSSFEILGSKDRPSNSKDLRPAIILDTTGGKEVVYFLPAETIIRVSDGEEVTAGSVLGRVPQATSGTKDITGGLPRVADLFEARRPKDHAIMAEMSGVVSFGSSTKGKNRFIITNEDGEVHEELIPKWRQINVFENETVARGEVIADGPLNPHDILRLQGETALANYIVDEVQDVYRLQGVKINDKHIEVIIRQMLRKVEITDAGDSNYFKGDQVEYADVKATNEKLLAEDKFPVQFERQLLGITKASLATESFISAASFQETTRVLTAAAVEGKVDELRGLKENVVVGRLIPAGTGLAYHAARKKAKEGKPAYDVESALDAAFDIEATTSAQDFRSFDEAFAQELSQDK</sequence>